<feature type="chain" id="PRO_0000090557" description="L-rhamnose isomerase">
    <location>
        <begin position="1"/>
        <end position="427"/>
    </location>
</feature>
<feature type="binding site" evidence="1">
    <location>
        <position position="264"/>
    </location>
    <ligand>
        <name>Mn(2+)</name>
        <dbReference type="ChEBI" id="CHEBI:29035"/>
    </ligand>
</feature>
<feature type="binding site" evidence="1">
    <location>
        <position position="296"/>
    </location>
    <ligand>
        <name>Mn(2+)</name>
        <dbReference type="ChEBI" id="CHEBI:29035"/>
    </ligand>
</feature>
<feature type="binding site" evidence="1">
    <location>
        <position position="298"/>
    </location>
    <ligand>
        <name>Mn(2+)</name>
        <dbReference type="ChEBI" id="CHEBI:29035"/>
    </ligand>
</feature>
<name>RHAA_LACPL</name>
<organism>
    <name type="scientific">Lactiplantibacillus plantarum (strain ATCC BAA-793 / NCIMB 8826 / WCFS1)</name>
    <name type="common">Lactobacillus plantarum</name>
    <dbReference type="NCBI Taxonomy" id="220668"/>
    <lineage>
        <taxon>Bacteria</taxon>
        <taxon>Bacillati</taxon>
        <taxon>Bacillota</taxon>
        <taxon>Bacilli</taxon>
        <taxon>Lactobacillales</taxon>
        <taxon>Lactobacillaceae</taxon>
        <taxon>Lactiplantibacillus</taxon>
    </lineage>
</organism>
<keyword id="KW-0963">Cytoplasm</keyword>
<keyword id="KW-0413">Isomerase</keyword>
<keyword id="KW-0464">Manganese</keyword>
<keyword id="KW-0479">Metal-binding</keyword>
<keyword id="KW-1185">Reference proteome</keyword>
<keyword id="KW-0684">Rhamnose metabolism</keyword>
<proteinExistence type="inferred from homology"/>
<accession>Q88S51</accession>
<accession>F9ULE7</accession>
<evidence type="ECO:0000255" key="1">
    <source>
        <dbReference type="HAMAP-Rule" id="MF_00541"/>
    </source>
</evidence>
<sequence>MVKTDEVEKAYQVAKERYAEIGVDTEKAMEALKKVKLSVHCWQGDDIHGFLNPDQELTGGIGVSGDYPGIARTPDQLTGDLHEALSLIPGSHKVALHTLYAVTDKKKDFNEVGPEDFKYWVDWAKQEGIGLDMNPTFFSHPMVKHNFTLASPEKSVRDYWIEVGKKSREIANYFGQELGQQSVNNFWIPDGFKDNPIDKQAPRERLIESLDEVFAKKYDEKNTIEAVEGKLFGTGIESYTVGSHLFYNNYAISRGKLWTIDAGHWHPTEDVSDKFSAFMPFGKGLMLHVSRPIRWDSDHVVIFDEALQRITRSLVRDNELERTNIGLDFFDATINRVSAWVIGARATQKALLQAMLAPIDDLKKAELNYDFTKRLAVTEELKSFPFGAVWDEFCLKNNTPVGTDWLDEIHNYEQKVQFPRDKKVVTE</sequence>
<comment type="function">
    <text evidence="1">Catalyzes the interconversion of L-rhamnose and L-rhamnulose.</text>
</comment>
<comment type="catalytic activity">
    <reaction evidence="1">
        <text>L-rhamnopyranose = L-rhamnulose</text>
        <dbReference type="Rhea" id="RHEA:23160"/>
        <dbReference type="ChEBI" id="CHEBI:17897"/>
        <dbReference type="ChEBI" id="CHEBI:62346"/>
        <dbReference type="EC" id="5.3.1.14"/>
    </reaction>
</comment>
<comment type="cofactor">
    <cofactor evidence="1">
        <name>Mn(2+)</name>
        <dbReference type="ChEBI" id="CHEBI:29035"/>
    </cofactor>
    <text evidence="1">Binds 1 Mn(2+) ion per subunit.</text>
</comment>
<comment type="pathway">
    <text evidence="1">Carbohydrate degradation; L-rhamnose degradation; glycerone phosphate from L-rhamnose: step 1/3.</text>
</comment>
<comment type="subcellular location">
    <subcellularLocation>
        <location evidence="1">Cytoplasm</location>
    </subcellularLocation>
</comment>
<comment type="similarity">
    <text evidence="1">Belongs to the rhamnose isomerase family.</text>
</comment>
<protein>
    <recommendedName>
        <fullName evidence="1">L-rhamnose isomerase</fullName>
        <ecNumber evidence="1">5.3.1.14</ecNumber>
    </recommendedName>
</protein>
<dbReference type="EC" id="5.3.1.14" evidence="1"/>
<dbReference type="EMBL" id="AL935263">
    <property type="protein sequence ID" value="CCC80554.1"/>
    <property type="molecule type" value="Genomic_DNA"/>
</dbReference>
<dbReference type="RefSeq" id="WP_011102237.1">
    <property type="nucleotide sequence ID" value="NC_004567.2"/>
</dbReference>
<dbReference type="RefSeq" id="YP_004891068.1">
    <property type="nucleotide sequence ID" value="NC_004567.2"/>
</dbReference>
<dbReference type="SMR" id="Q88S51"/>
<dbReference type="STRING" id="220668.lp_3593"/>
<dbReference type="EnsemblBacteria" id="CCC80554">
    <property type="protein sequence ID" value="CCC80554"/>
    <property type="gene ID" value="lp_3593"/>
</dbReference>
<dbReference type="KEGG" id="lpl:lp_3593"/>
<dbReference type="PATRIC" id="fig|220668.9.peg.2998"/>
<dbReference type="eggNOG" id="COG4806">
    <property type="taxonomic scope" value="Bacteria"/>
</dbReference>
<dbReference type="HOGENOM" id="CLU_052790_0_0_9"/>
<dbReference type="OrthoDB" id="9766697at2"/>
<dbReference type="PhylomeDB" id="Q88S51"/>
<dbReference type="UniPathway" id="UPA00541">
    <property type="reaction ID" value="UER00601"/>
</dbReference>
<dbReference type="Proteomes" id="UP000000432">
    <property type="component" value="Chromosome"/>
</dbReference>
<dbReference type="GO" id="GO:0005737">
    <property type="term" value="C:cytoplasm"/>
    <property type="evidence" value="ECO:0007669"/>
    <property type="project" value="UniProtKB-SubCell"/>
</dbReference>
<dbReference type="GO" id="GO:0008740">
    <property type="term" value="F:L-rhamnose isomerase activity"/>
    <property type="evidence" value="ECO:0007669"/>
    <property type="project" value="UniProtKB-UniRule"/>
</dbReference>
<dbReference type="GO" id="GO:0030145">
    <property type="term" value="F:manganese ion binding"/>
    <property type="evidence" value="ECO:0007669"/>
    <property type="project" value="UniProtKB-UniRule"/>
</dbReference>
<dbReference type="GO" id="GO:0019324">
    <property type="term" value="P:L-lyxose metabolic process"/>
    <property type="evidence" value="ECO:0007669"/>
    <property type="project" value="TreeGrafter"/>
</dbReference>
<dbReference type="GO" id="GO:0019301">
    <property type="term" value="P:rhamnose catabolic process"/>
    <property type="evidence" value="ECO:0007669"/>
    <property type="project" value="UniProtKB-UniRule"/>
</dbReference>
<dbReference type="Gene3D" id="3.20.20.150">
    <property type="entry name" value="Divalent-metal-dependent TIM barrel enzymes"/>
    <property type="match status" value="1"/>
</dbReference>
<dbReference type="HAMAP" id="MF_00541">
    <property type="entry name" value="RhaA"/>
    <property type="match status" value="1"/>
</dbReference>
<dbReference type="InterPro" id="IPR050337">
    <property type="entry name" value="L-rhamnose_isomerase"/>
</dbReference>
<dbReference type="InterPro" id="IPR009308">
    <property type="entry name" value="Rhamnose_isomerase"/>
</dbReference>
<dbReference type="InterPro" id="IPR036237">
    <property type="entry name" value="Xyl_isomerase-like_sf"/>
</dbReference>
<dbReference type="NCBIfam" id="NF002203">
    <property type="entry name" value="PRK01076.1"/>
    <property type="match status" value="1"/>
</dbReference>
<dbReference type="NCBIfam" id="TIGR01748">
    <property type="entry name" value="rhaA"/>
    <property type="match status" value="1"/>
</dbReference>
<dbReference type="PANTHER" id="PTHR30268">
    <property type="entry name" value="L-RHAMNOSE ISOMERASE"/>
    <property type="match status" value="1"/>
</dbReference>
<dbReference type="PANTHER" id="PTHR30268:SF0">
    <property type="entry name" value="L-RHAMNOSE ISOMERASE"/>
    <property type="match status" value="1"/>
</dbReference>
<dbReference type="Pfam" id="PF06134">
    <property type="entry name" value="RhaA"/>
    <property type="match status" value="1"/>
</dbReference>
<dbReference type="SUPFAM" id="SSF51658">
    <property type="entry name" value="Xylose isomerase-like"/>
    <property type="match status" value="1"/>
</dbReference>
<reference key="1">
    <citation type="journal article" date="2003" name="Proc. Natl. Acad. Sci. U.S.A.">
        <title>Complete genome sequence of Lactobacillus plantarum WCFS1.</title>
        <authorList>
            <person name="Kleerebezem M."/>
            <person name="Boekhorst J."/>
            <person name="van Kranenburg R."/>
            <person name="Molenaar D."/>
            <person name="Kuipers O.P."/>
            <person name="Leer R."/>
            <person name="Tarchini R."/>
            <person name="Peters S.A."/>
            <person name="Sandbrink H.M."/>
            <person name="Fiers M.W.E.J."/>
            <person name="Stiekema W."/>
            <person name="Klein Lankhorst R.M."/>
            <person name="Bron P.A."/>
            <person name="Hoffer S.M."/>
            <person name="Nierop Groot M.N."/>
            <person name="Kerkhoven R."/>
            <person name="De Vries M."/>
            <person name="Ursing B."/>
            <person name="De Vos W.M."/>
            <person name="Siezen R.J."/>
        </authorList>
    </citation>
    <scope>NUCLEOTIDE SEQUENCE [LARGE SCALE GENOMIC DNA]</scope>
    <source>
        <strain>ATCC BAA-793 / NCIMB 8826 / WCFS1</strain>
    </source>
</reference>
<reference key="2">
    <citation type="journal article" date="2012" name="J. Bacteriol.">
        <title>Complete resequencing and reannotation of the Lactobacillus plantarum WCFS1 genome.</title>
        <authorList>
            <person name="Siezen R.J."/>
            <person name="Francke C."/>
            <person name="Renckens B."/>
            <person name="Boekhorst J."/>
            <person name="Wels M."/>
            <person name="Kleerebezem M."/>
            <person name="van Hijum S.A."/>
        </authorList>
    </citation>
    <scope>NUCLEOTIDE SEQUENCE [LARGE SCALE GENOMIC DNA]</scope>
    <scope>GENOME REANNOTATION</scope>
    <source>
        <strain>ATCC BAA-793 / NCIMB 8826 / WCFS1</strain>
    </source>
</reference>
<gene>
    <name evidence="1" type="primary">rhaA</name>
    <name type="ordered locus">lp_3593</name>
</gene>